<keyword id="KW-0240">DNA-directed RNA polymerase</keyword>
<keyword id="KW-0460">Magnesium</keyword>
<keyword id="KW-0479">Metal-binding</keyword>
<keyword id="KW-0548">Nucleotidyltransferase</keyword>
<keyword id="KW-0804">Transcription</keyword>
<keyword id="KW-0808">Transferase</keyword>
<keyword id="KW-0862">Zinc</keyword>
<comment type="function">
    <text evidence="1">DNA-dependent RNA polymerase catalyzes the transcription of DNA into RNA using the four ribonucleoside triphosphates as substrates.</text>
</comment>
<comment type="catalytic activity">
    <reaction evidence="1">
        <text>RNA(n) + a ribonucleoside 5'-triphosphate = RNA(n+1) + diphosphate</text>
        <dbReference type="Rhea" id="RHEA:21248"/>
        <dbReference type="Rhea" id="RHEA-COMP:14527"/>
        <dbReference type="Rhea" id="RHEA-COMP:17342"/>
        <dbReference type="ChEBI" id="CHEBI:33019"/>
        <dbReference type="ChEBI" id="CHEBI:61557"/>
        <dbReference type="ChEBI" id="CHEBI:140395"/>
        <dbReference type="EC" id="2.7.7.6"/>
    </reaction>
</comment>
<comment type="cofactor">
    <cofactor evidence="1">
        <name>Mg(2+)</name>
        <dbReference type="ChEBI" id="CHEBI:18420"/>
    </cofactor>
    <text evidence="1">Binds 1 Mg(2+) ion per subunit.</text>
</comment>
<comment type="cofactor">
    <cofactor evidence="1">
        <name>Zn(2+)</name>
        <dbReference type="ChEBI" id="CHEBI:29105"/>
    </cofactor>
    <text evidence="1">Binds 2 Zn(2+) ions per subunit.</text>
</comment>
<comment type="subunit">
    <text evidence="1">The RNAP catalytic core consists of 2 alpha, 1 beta, 1 beta' and 1 omega subunit. When a sigma factor is associated with the core the holoenzyme is formed, which can initiate transcription.</text>
</comment>
<comment type="similarity">
    <text evidence="1">Belongs to the RNA polymerase beta' chain family.</text>
</comment>
<name>RPOC_RHIJ3</name>
<gene>
    <name evidence="1" type="primary">rpoC</name>
    <name type="ordered locus">RL1767</name>
</gene>
<evidence type="ECO:0000255" key="1">
    <source>
        <dbReference type="HAMAP-Rule" id="MF_01322"/>
    </source>
</evidence>
<accession>Q1MIE8</accession>
<dbReference type="EC" id="2.7.7.6" evidence="1"/>
<dbReference type="EMBL" id="AM236080">
    <property type="protein sequence ID" value="CAK07262.1"/>
    <property type="molecule type" value="Genomic_DNA"/>
</dbReference>
<dbReference type="RefSeq" id="WP_011651420.1">
    <property type="nucleotide sequence ID" value="NC_008380.1"/>
</dbReference>
<dbReference type="SMR" id="Q1MIE8"/>
<dbReference type="EnsemblBacteria" id="CAK07262">
    <property type="protein sequence ID" value="CAK07262"/>
    <property type="gene ID" value="RL1767"/>
</dbReference>
<dbReference type="KEGG" id="rle:RL1767"/>
<dbReference type="eggNOG" id="COG0086">
    <property type="taxonomic scope" value="Bacteria"/>
</dbReference>
<dbReference type="HOGENOM" id="CLU_000524_3_1_5"/>
<dbReference type="Proteomes" id="UP000006575">
    <property type="component" value="Chromosome"/>
</dbReference>
<dbReference type="GO" id="GO:0000428">
    <property type="term" value="C:DNA-directed RNA polymerase complex"/>
    <property type="evidence" value="ECO:0007669"/>
    <property type="project" value="UniProtKB-KW"/>
</dbReference>
<dbReference type="GO" id="GO:0003677">
    <property type="term" value="F:DNA binding"/>
    <property type="evidence" value="ECO:0007669"/>
    <property type="project" value="UniProtKB-UniRule"/>
</dbReference>
<dbReference type="GO" id="GO:0003899">
    <property type="term" value="F:DNA-directed RNA polymerase activity"/>
    <property type="evidence" value="ECO:0007669"/>
    <property type="project" value="UniProtKB-UniRule"/>
</dbReference>
<dbReference type="GO" id="GO:0000287">
    <property type="term" value="F:magnesium ion binding"/>
    <property type="evidence" value="ECO:0007669"/>
    <property type="project" value="UniProtKB-UniRule"/>
</dbReference>
<dbReference type="GO" id="GO:0008270">
    <property type="term" value="F:zinc ion binding"/>
    <property type="evidence" value="ECO:0007669"/>
    <property type="project" value="UniProtKB-UniRule"/>
</dbReference>
<dbReference type="GO" id="GO:0006351">
    <property type="term" value="P:DNA-templated transcription"/>
    <property type="evidence" value="ECO:0007669"/>
    <property type="project" value="UniProtKB-UniRule"/>
</dbReference>
<dbReference type="CDD" id="cd02655">
    <property type="entry name" value="RNAP_beta'_C"/>
    <property type="match status" value="1"/>
</dbReference>
<dbReference type="CDD" id="cd01609">
    <property type="entry name" value="RNAP_beta'_N"/>
    <property type="match status" value="1"/>
</dbReference>
<dbReference type="Gene3D" id="1.10.132.30">
    <property type="match status" value="1"/>
</dbReference>
<dbReference type="Gene3D" id="1.10.150.390">
    <property type="match status" value="1"/>
</dbReference>
<dbReference type="Gene3D" id="1.10.1790.20">
    <property type="match status" value="1"/>
</dbReference>
<dbReference type="Gene3D" id="1.10.40.90">
    <property type="match status" value="1"/>
</dbReference>
<dbReference type="Gene3D" id="2.40.40.20">
    <property type="match status" value="1"/>
</dbReference>
<dbReference type="Gene3D" id="2.40.50.100">
    <property type="match status" value="3"/>
</dbReference>
<dbReference type="Gene3D" id="4.10.860.120">
    <property type="entry name" value="RNA polymerase II, clamp domain"/>
    <property type="match status" value="1"/>
</dbReference>
<dbReference type="Gene3D" id="1.10.274.100">
    <property type="entry name" value="RNA polymerase Rpb1, domain 3"/>
    <property type="match status" value="2"/>
</dbReference>
<dbReference type="HAMAP" id="MF_01322">
    <property type="entry name" value="RNApol_bact_RpoC"/>
    <property type="match status" value="1"/>
</dbReference>
<dbReference type="InterPro" id="IPR045867">
    <property type="entry name" value="DNA-dir_RpoC_beta_prime"/>
</dbReference>
<dbReference type="InterPro" id="IPR012754">
    <property type="entry name" value="DNA-dir_RpoC_beta_prime_bact"/>
</dbReference>
<dbReference type="InterPro" id="IPR000722">
    <property type="entry name" value="RNA_pol_asu"/>
</dbReference>
<dbReference type="InterPro" id="IPR006592">
    <property type="entry name" value="RNA_pol_N"/>
</dbReference>
<dbReference type="InterPro" id="IPR007080">
    <property type="entry name" value="RNA_pol_Rpb1_1"/>
</dbReference>
<dbReference type="InterPro" id="IPR007066">
    <property type="entry name" value="RNA_pol_Rpb1_3"/>
</dbReference>
<dbReference type="InterPro" id="IPR042102">
    <property type="entry name" value="RNA_pol_Rpb1_3_sf"/>
</dbReference>
<dbReference type="InterPro" id="IPR007083">
    <property type="entry name" value="RNA_pol_Rpb1_4"/>
</dbReference>
<dbReference type="InterPro" id="IPR007081">
    <property type="entry name" value="RNA_pol_Rpb1_5"/>
</dbReference>
<dbReference type="InterPro" id="IPR044893">
    <property type="entry name" value="RNA_pol_Rpb1_clamp_domain"/>
</dbReference>
<dbReference type="InterPro" id="IPR038120">
    <property type="entry name" value="Rpb1_funnel_sf"/>
</dbReference>
<dbReference type="NCBIfam" id="TIGR02386">
    <property type="entry name" value="rpoC_TIGR"/>
    <property type="match status" value="1"/>
</dbReference>
<dbReference type="PANTHER" id="PTHR19376">
    <property type="entry name" value="DNA-DIRECTED RNA POLYMERASE"/>
    <property type="match status" value="1"/>
</dbReference>
<dbReference type="PANTHER" id="PTHR19376:SF54">
    <property type="entry name" value="DNA-DIRECTED RNA POLYMERASE SUBUNIT BETA"/>
    <property type="match status" value="1"/>
</dbReference>
<dbReference type="Pfam" id="PF04997">
    <property type="entry name" value="RNA_pol_Rpb1_1"/>
    <property type="match status" value="1"/>
</dbReference>
<dbReference type="Pfam" id="PF00623">
    <property type="entry name" value="RNA_pol_Rpb1_2"/>
    <property type="match status" value="1"/>
</dbReference>
<dbReference type="Pfam" id="PF04983">
    <property type="entry name" value="RNA_pol_Rpb1_3"/>
    <property type="match status" value="1"/>
</dbReference>
<dbReference type="Pfam" id="PF05000">
    <property type="entry name" value="RNA_pol_Rpb1_4"/>
    <property type="match status" value="1"/>
</dbReference>
<dbReference type="Pfam" id="PF04998">
    <property type="entry name" value="RNA_pol_Rpb1_5"/>
    <property type="match status" value="1"/>
</dbReference>
<dbReference type="SMART" id="SM00663">
    <property type="entry name" value="RPOLA_N"/>
    <property type="match status" value="1"/>
</dbReference>
<dbReference type="SUPFAM" id="SSF64484">
    <property type="entry name" value="beta and beta-prime subunits of DNA dependent RNA-polymerase"/>
    <property type="match status" value="1"/>
</dbReference>
<feature type="chain" id="PRO_0000353416" description="DNA-directed RNA polymerase subunit beta'">
    <location>
        <begin position="1"/>
        <end position="1402"/>
    </location>
</feature>
<feature type="binding site" evidence="1">
    <location>
        <position position="71"/>
    </location>
    <ligand>
        <name>Zn(2+)</name>
        <dbReference type="ChEBI" id="CHEBI:29105"/>
        <label>1</label>
    </ligand>
</feature>
<feature type="binding site" evidence="1">
    <location>
        <position position="73"/>
    </location>
    <ligand>
        <name>Zn(2+)</name>
        <dbReference type="ChEBI" id="CHEBI:29105"/>
        <label>1</label>
    </ligand>
</feature>
<feature type="binding site" evidence="1">
    <location>
        <position position="86"/>
    </location>
    <ligand>
        <name>Zn(2+)</name>
        <dbReference type="ChEBI" id="CHEBI:29105"/>
        <label>1</label>
    </ligand>
</feature>
<feature type="binding site" evidence="1">
    <location>
        <position position="89"/>
    </location>
    <ligand>
        <name>Zn(2+)</name>
        <dbReference type="ChEBI" id="CHEBI:29105"/>
        <label>1</label>
    </ligand>
</feature>
<feature type="binding site" evidence="1">
    <location>
        <position position="462"/>
    </location>
    <ligand>
        <name>Mg(2+)</name>
        <dbReference type="ChEBI" id="CHEBI:18420"/>
    </ligand>
</feature>
<feature type="binding site" evidence="1">
    <location>
        <position position="464"/>
    </location>
    <ligand>
        <name>Mg(2+)</name>
        <dbReference type="ChEBI" id="CHEBI:18420"/>
    </ligand>
</feature>
<feature type="binding site" evidence="1">
    <location>
        <position position="466"/>
    </location>
    <ligand>
        <name>Mg(2+)</name>
        <dbReference type="ChEBI" id="CHEBI:18420"/>
    </ligand>
</feature>
<feature type="binding site" evidence="1">
    <location>
        <position position="811"/>
    </location>
    <ligand>
        <name>Zn(2+)</name>
        <dbReference type="ChEBI" id="CHEBI:29105"/>
        <label>2</label>
    </ligand>
</feature>
<feature type="binding site" evidence="1">
    <location>
        <position position="885"/>
    </location>
    <ligand>
        <name>Zn(2+)</name>
        <dbReference type="ChEBI" id="CHEBI:29105"/>
        <label>2</label>
    </ligand>
</feature>
<feature type="binding site" evidence="1">
    <location>
        <position position="892"/>
    </location>
    <ligand>
        <name>Zn(2+)</name>
        <dbReference type="ChEBI" id="CHEBI:29105"/>
        <label>2</label>
    </ligand>
</feature>
<feature type="binding site" evidence="1">
    <location>
        <position position="895"/>
    </location>
    <ligand>
        <name>Zn(2+)</name>
        <dbReference type="ChEBI" id="CHEBI:29105"/>
        <label>2</label>
    </ligand>
</feature>
<protein>
    <recommendedName>
        <fullName evidence="1">DNA-directed RNA polymerase subunit beta'</fullName>
        <shortName evidence="1">RNAP subunit beta'</shortName>
        <ecNumber evidence="1">2.7.7.6</ecNumber>
    </recommendedName>
    <alternativeName>
        <fullName evidence="1">RNA polymerase subunit beta'</fullName>
    </alternativeName>
    <alternativeName>
        <fullName evidence="1">Transcriptase subunit beta'</fullName>
    </alternativeName>
</protein>
<reference key="1">
    <citation type="journal article" date="2006" name="Genome Biol.">
        <title>The genome of Rhizobium leguminosarum has recognizable core and accessory components.</title>
        <authorList>
            <person name="Young J.P.W."/>
            <person name="Crossman L.C."/>
            <person name="Johnston A.W.B."/>
            <person name="Thomson N.R."/>
            <person name="Ghazoui Z.F."/>
            <person name="Hull K.H."/>
            <person name="Wexler M."/>
            <person name="Curson A.R.J."/>
            <person name="Todd J.D."/>
            <person name="Poole P.S."/>
            <person name="Mauchline T.H."/>
            <person name="East A.K."/>
            <person name="Quail M.A."/>
            <person name="Churcher C."/>
            <person name="Arrowsmith C."/>
            <person name="Cherevach I."/>
            <person name="Chillingworth T."/>
            <person name="Clarke K."/>
            <person name="Cronin A."/>
            <person name="Davis P."/>
            <person name="Fraser A."/>
            <person name="Hance Z."/>
            <person name="Hauser H."/>
            <person name="Jagels K."/>
            <person name="Moule S."/>
            <person name="Mungall K."/>
            <person name="Norbertczak H."/>
            <person name="Rabbinowitsch E."/>
            <person name="Sanders M."/>
            <person name="Simmonds M."/>
            <person name="Whitehead S."/>
            <person name="Parkhill J."/>
        </authorList>
    </citation>
    <scope>NUCLEOTIDE SEQUENCE [LARGE SCALE GENOMIC DNA]</scope>
    <source>
        <strain>DSM 114642 / LMG 32736 / 3841</strain>
    </source>
</reference>
<organism>
    <name type="scientific">Rhizobium johnstonii (strain DSM 114642 / LMG 32736 / 3841)</name>
    <name type="common">Rhizobium leguminosarum bv. viciae</name>
    <dbReference type="NCBI Taxonomy" id="216596"/>
    <lineage>
        <taxon>Bacteria</taxon>
        <taxon>Pseudomonadati</taxon>
        <taxon>Pseudomonadota</taxon>
        <taxon>Alphaproteobacteria</taxon>
        <taxon>Hyphomicrobiales</taxon>
        <taxon>Rhizobiaceae</taxon>
        <taxon>Rhizobium/Agrobacterium group</taxon>
        <taxon>Rhizobium</taxon>
        <taxon>Rhizobium johnstonii</taxon>
    </lineage>
</organism>
<proteinExistence type="inferred from homology"/>
<sequence length="1402" mass="155492">MNQEVMNLFNPQVPAQNFDSIRISIASPEKILSWSYGEIKKPETINYRTFKPERDGLFCARIFGPIKDYECLCGKYKRMKYKGIICEKCGVEVTLSRVRRERMGHIELAAPVAHIWFLKSLPSRISTLLDMTLKDVERVLYFENYIVTEPGLTALKEHQLLSEEEYMLAVDEYGEDQFTAMIGAEAIYEMLASMNLEKIAGDLRAELADTTSDLKQKKLMKRLKIVENFMESGNRPEWMIMKVVPVIPPDLRPLVPLDGGRFATSDLNDLYRRVINRNNRLKRLIELRAPGIIIRNEKRMLQESVDALFDNGRRGRVITGANKRPLKSLSDMLKGKQGRFRQNLLGKRVDYSGRSVIVTGPELKLHQCGLPKKMALELFKPFIYARLDAKGYSSTVKQAKKLVEKEKPEVWDILDEVIREHPVLLNRAPTLHRLGIQAFEPILVEGKAIQLHPLVCTAFNADFDGDQMAVHVPLSLEAQLEARVLMMSTNNILHPANGAPIIVPSQDMVLGLYYLSILNQNEPGEGMAFSDLGELHHALESKVVTLHTKIRGRFKSVDEDGKPYSKIYETTPGRLLIGELLPKNGKVPFDICNQEMTKKNISKMIDTVYRHCGQKDTVIFCDRIMQLGFAHACRAGISFGKDDMVIPDAKAKIVADTENLVKEYEQQYNDGLITQGEKYNKVVDAWGKATEKVAEEMMARIKAVEFDEKTGRQKPMNSIYMMSHSGARGSPNQMRQLGGMRGLMAKPSGEIIETPIISNFKEGLTVNEYFNSTHGARKGLADTALKTANSGYLTRRLVDVAQDCIVTHVDCGTQTGLTMTAIVDAGQVVASIGARILGRTALDDIDHPVTGERIVDAGKMILEPDVVEIEKAGIQSIRIRSALTCEIQTGVCSVCYGRDLARGTPVNMGEAVGVIAAQSIGEPGTQLTMRTFHLGGTATVVDQSFLEASYEGTVQIKNRNILRNSDGNLVAMGRNMTVQILDERGVERSSQRVAYGSKLHVDEGDKVKRGQRLAEWDPYTRPMMTEVAGTVQFEDLVDGLSVLEATDESTGITKRQVIDWRSTPRGSDLKPAIVIKDASGNIAKLSRGGDARFFLSVDAILSVEPGTKVSQGDVLARSPLESAKTKDITGGLPRVAELFEARRPKDHAIIAEIDGTIRLGRDYKNKRRVIIEPAEDGVEPVEYLIPKGKPFHLQEGDYIEKGDYILDGNPAPHDILAIKGVEALASYLVNEIQEVYRLQGVVINDKHIEVIVRQMLQKVEITDAGDSTYIVGDNVDRIELEDVNDHLIEQGKKPAYGDPVLLGITKASLQTPSFISAASFQETTKVLTEAAIAGKTDGLQGLKENVIVGRLIPAGTGGTMTQIRRIATSRDEMILEERRKGTGAAVATPMLQDMAEKAPAAE</sequence>